<name>HEMH_ECO55</name>
<gene>
    <name evidence="1" type="primary">hemH</name>
    <name type="ordered locus">EC55989_0488</name>
</gene>
<organism>
    <name type="scientific">Escherichia coli (strain 55989 / EAEC)</name>
    <dbReference type="NCBI Taxonomy" id="585055"/>
    <lineage>
        <taxon>Bacteria</taxon>
        <taxon>Pseudomonadati</taxon>
        <taxon>Pseudomonadota</taxon>
        <taxon>Gammaproteobacteria</taxon>
        <taxon>Enterobacterales</taxon>
        <taxon>Enterobacteriaceae</taxon>
        <taxon>Escherichia</taxon>
    </lineage>
</organism>
<sequence>MRQTKTGILLANLGTPDAPTPEAVKRYLKQFLSDRRVVDTSRLLWWPLLRGVILPLRSPRVAKLYASVWMEDGSPLMVYSRQQQQALAQRLPDTPVALGMSYGSPSLESAVDELLAEHVDHIVVLPLYPQFSCSTVGAVWDELARILARKRSIPGISFIRDYADNHDYINALANSVRASFAKHGEPDLLLLSYHGIPQRYADEGDDYPQRCRTTTRELASALGMAPEKVMMTFQSRFGREPWLMPYTDETLKMLGEKGVGHIQVMCPGFAADCLETLEEIAEQNREVFLGAGGKKYEYIPALNATPEHIEMMANLVAAYR</sequence>
<evidence type="ECO:0000255" key="1">
    <source>
        <dbReference type="HAMAP-Rule" id="MF_00323"/>
    </source>
</evidence>
<reference key="1">
    <citation type="journal article" date="2009" name="PLoS Genet.">
        <title>Organised genome dynamics in the Escherichia coli species results in highly diverse adaptive paths.</title>
        <authorList>
            <person name="Touchon M."/>
            <person name="Hoede C."/>
            <person name="Tenaillon O."/>
            <person name="Barbe V."/>
            <person name="Baeriswyl S."/>
            <person name="Bidet P."/>
            <person name="Bingen E."/>
            <person name="Bonacorsi S."/>
            <person name="Bouchier C."/>
            <person name="Bouvet O."/>
            <person name="Calteau A."/>
            <person name="Chiapello H."/>
            <person name="Clermont O."/>
            <person name="Cruveiller S."/>
            <person name="Danchin A."/>
            <person name="Diard M."/>
            <person name="Dossat C."/>
            <person name="Karoui M.E."/>
            <person name="Frapy E."/>
            <person name="Garry L."/>
            <person name="Ghigo J.M."/>
            <person name="Gilles A.M."/>
            <person name="Johnson J."/>
            <person name="Le Bouguenec C."/>
            <person name="Lescat M."/>
            <person name="Mangenot S."/>
            <person name="Martinez-Jehanne V."/>
            <person name="Matic I."/>
            <person name="Nassif X."/>
            <person name="Oztas S."/>
            <person name="Petit M.A."/>
            <person name="Pichon C."/>
            <person name="Rouy Z."/>
            <person name="Ruf C.S."/>
            <person name="Schneider D."/>
            <person name="Tourret J."/>
            <person name="Vacherie B."/>
            <person name="Vallenet D."/>
            <person name="Medigue C."/>
            <person name="Rocha E.P.C."/>
            <person name="Denamur E."/>
        </authorList>
    </citation>
    <scope>NUCLEOTIDE SEQUENCE [LARGE SCALE GENOMIC DNA]</scope>
    <source>
        <strain>55989 / EAEC</strain>
    </source>
</reference>
<protein>
    <recommendedName>
        <fullName evidence="1">Ferrochelatase</fullName>
        <ecNumber evidence="1">4.98.1.1</ecNumber>
    </recommendedName>
    <alternativeName>
        <fullName evidence="1">Heme synthase</fullName>
    </alternativeName>
    <alternativeName>
        <fullName evidence="1">Protoheme ferro-lyase</fullName>
    </alternativeName>
</protein>
<feature type="chain" id="PRO_1000189983" description="Ferrochelatase">
    <location>
        <begin position="1"/>
        <end position="320"/>
    </location>
</feature>
<feature type="binding site" evidence="1">
    <location>
        <position position="194"/>
    </location>
    <ligand>
        <name>Fe cation</name>
        <dbReference type="ChEBI" id="CHEBI:24875"/>
    </ligand>
</feature>
<feature type="binding site" evidence="1">
    <location>
        <position position="275"/>
    </location>
    <ligand>
        <name>Fe cation</name>
        <dbReference type="ChEBI" id="CHEBI:24875"/>
    </ligand>
</feature>
<proteinExistence type="inferred from homology"/>
<keyword id="KW-0963">Cytoplasm</keyword>
<keyword id="KW-0350">Heme biosynthesis</keyword>
<keyword id="KW-0408">Iron</keyword>
<keyword id="KW-0456">Lyase</keyword>
<keyword id="KW-0479">Metal-binding</keyword>
<keyword id="KW-0627">Porphyrin biosynthesis</keyword>
<keyword id="KW-1185">Reference proteome</keyword>
<dbReference type="EC" id="4.98.1.1" evidence="1"/>
<dbReference type="EMBL" id="CU928145">
    <property type="protein sequence ID" value="CAU96361.1"/>
    <property type="molecule type" value="Genomic_DNA"/>
</dbReference>
<dbReference type="RefSeq" id="WP_001250088.1">
    <property type="nucleotide sequence ID" value="NC_011748.1"/>
</dbReference>
<dbReference type="SMR" id="B7L7A0"/>
<dbReference type="KEGG" id="eck:EC55989_0488"/>
<dbReference type="HOGENOM" id="CLU_018884_0_0_6"/>
<dbReference type="UniPathway" id="UPA00252">
    <property type="reaction ID" value="UER00325"/>
</dbReference>
<dbReference type="Proteomes" id="UP000000746">
    <property type="component" value="Chromosome"/>
</dbReference>
<dbReference type="GO" id="GO:0005737">
    <property type="term" value="C:cytoplasm"/>
    <property type="evidence" value="ECO:0007669"/>
    <property type="project" value="UniProtKB-SubCell"/>
</dbReference>
<dbReference type="GO" id="GO:0004325">
    <property type="term" value="F:ferrochelatase activity"/>
    <property type="evidence" value="ECO:0007669"/>
    <property type="project" value="UniProtKB-UniRule"/>
</dbReference>
<dbReference type="GO" id="GO:0046872">
    <property type="term" value="F:metal ion binding"/>
    <property type="evidence" value="ECO:0007669"/>
    <property type="project" value="UniProtKB-KW"/>
</dbReference>
<dbReference type="GO" id="GO:0006783">
    <property type="term" value="P:heme biosynthetic process"/>
    <property type="evidence" value="ECO:0007669"/>
    <property type="project" value="UniProtKB-UniRule"/>
</dbReference>
<dbReference type="CDD" id="cd00419">
    <property type="entry name" value="Ferrochelatase_C"/>
    <property type="match status" value="1"/>
</dbReference>
<dbReference type="CDD" id="cd03411">
    <property type="entry name" value="Ferrochelatase_N"/>
    <property type="match status" value="1"/>
</dbReference>
<dbReference type="FunFam" id="3.40.50.1400:FF:000004">
    <property type="entry name" value="Ferrochelatase"/>
    <property type="match status" value="1"/>
</dbReference>
<dbReference type="Gene3D" id="3.40.50.1400">
    <property type="match status" value="2"/>
</dbReference>
<dbReference type="HAMAP" id="MF_00323">
    <property type="entry name" value="Ferrochelatase"/>
    <property type="match status" value="1"/>
</dbReference>
<dbReference type="InterPro" id="IPR001015">
    <property type="entry name" value="Ferrochelatase"/>
</dbReference>
<dbReference type="InterPro" id="IPR019772">
    <property type="entry name" value="Ferrochelatase_AS"/>
</dbReference>
<dbReference type="InterPro" id="IPR033644">
    <property type="entry name" value="Ferrochelatase_C"/>
</dbReference>
<dbReference type="InterPro" id="IPR033659">
    <property type="entry name" value="Ferrochelatase_N"/>
</dbReference>
<dbReference type="NCBIfam" id="TIGR00109">
    <property type="entry name" value="hemH"/>
    <property type="match status" value="1"/>
</dbReference>
<dbReference type="PANTHER" id="PTHR11108">
    <property type="entry name" value="FERROCHELATASE"/>
    <property type="match status" value="1"/>
</dbReference>
<dbReference type="PANTHER" id="PTHR11108:SF1">
    <property type="entry name" value="FERROCHELATASE, MITOCHONDRIAL"/>
    <property type="match status" value="1"/>
</dbReference>
<dbReference type="Pfam" id="PF00762">
    <property type="entry name" value="Ferrochelatase"/>
    <property type="match status" value="1"/>
</dbReference>
<dbReference type="SUPFAM" id="SSF53800">
    <property type="entry name" value="Chelatase"/>
    <property type="match status" value="1"/>
</dbReference>
<dbReference type="PROSITE" id="PS00534">
    <property type="entry name" value="FERROCHELATASE"/>
    <property type="match status" value="1"/>
</dbReference>
<comment type="function">
    <text evidence="1">Catalyzes the ferrous insertion into protoporphyrin IX.</text>
</comment>
<comment type="catalytic activity">
    <reaction evidence="1">
        <text>heme b + 2 H(+) = protoporphyrin IX + Fe(2+)</text>
        <dbReference type="Rhea" id="RHEA:22584"/>
        <dbReference type="ChEBI" id="CHEBI:15378"/>
        <dbReference type="ChEBI" id="CHEBI:29033"/>
        <dbReference type="ChEBI" id="CHEBI:57306"/>
        <dbReference type="ChEBI" id="CHEBI:60344"/>
        <dbReference type="EC" id="4.98.1.1"/>
    </reaction>
</comment>
<comment type="pathway">
    <text evidence="1">Porphyrin-containing compound metabolism; protoheme biosynthesis; protoheme from protoporphyrin-IX: step 1/1.</text>
</comment>
<comment type="subunit">
    <text evidence="1">Monomer.</text>
</comment>
<comment type="subcellular location">
    <subcellularLocation>
        <location evidence="1">Cytoplasm</location>
    </subcellularLocation>
</comment>
<comment type="similarity">
    <text evidence="1">Belongs to the ferrochelatase family.</text>
</comment>
<accession>B7L7A0</accession>